<dbReference type="EMBL" id="AC007323">
    <property type="protein sequence ID" value="AAF26473.1"/>
    <property type="status" value="ALT_SEQ"/>
    <property type="molecule type" value="Genomic_DNA"/>
</dbReference>
<dbReference type="EMBL" id="CP002684">
    <property type="protein sequence ID" value="AEE27228.1"/>
    <property type="molecule type" value="Genomic_DNA"/>
</dbReference>
<dbReference type="EMBL" id="CP002684">
    <property type="protein sequence ID" value="AEE27229.1"/>
    <property type="molecule type" value="Genomic_DNA"/>
</dbReference>
<dbReference type="EMBL" id="BX816126">
    <property type="status" value="NOT_ANNOTATED_CDS"/>
    <property type="molecule type" value="mRNA"/>
</dbReference>
<dbReference type="EMBL" id="BT015826">
    <property type="protein sequence ID" value="AAU94389.1"/>
    <property type="molecule type" value="mRNA"/>
</dbReference>
<dbReference type="EMBL" id="BT020209">
    <property type="protein sequence ID" value="AAV59275.1"/>
    <property type="molecule type" value="mRNA"/>
</dbReference>
<dbReference type="PIR" id="D86141">
    <property type="entry name" value="D86141"/>
</dbReference>
<dbReference type="RefSeq" id="NP_563617.1">
    <molecule id="Q5XEZ0-1"/>
    <property type="nucleotide sequence ID" value="NM_099989.3"/>
</dbReference>
<dbReference type="RefSeq" id="NP_973734.1">
    <molecule id="Q5XEZ0-2"/>
    <property type="nucleotide sequence ID" value="NM_202005.3"/>
</dbReference>
<dbReference type="SMR" id="Q5XEZ0"/>
<dbReference type="BioGRID" id="24785">
    <property type="interactions" value="5"/>
</dbReference>
<dbReference type="FunCoup" id="Q5XEZ0">
    <property type="interactions" value="3"/>
</dbReference>
<dbReference type="IntAct" id="Q5XEZ0">
    <property type="interactions" value="5"/>
</dbReference>
<dbReference type="STRING" id="3702.Q5XEZ0"/>
<dbReference type="PaxDb" id="3702-AT1G01070.1"/>
<dbReference type="ProteomicsDB" id="243087">
    <molecule id="Q5XEZ0-1"/>
</dbReference>
<dbReference type="EnsemblPlants" id="AT1G01070.1">
    <molecule id="Q5XEZ0-1"/>
    <property type="protein sequence ID" value="AT1G01070.1"/>
    <property type="gene ID" value="AT1G01070"/>
</dbReference>
<dbReference type="EnsemblPlants" id="AT1G01070.2">
    <molecule id="Q5XEZ0-2"/>
    <property type="protein sequence ID" value="AT1G01070.2"/>
    <property type="gene ID" value="AT1G01070"/>
</dbReference>
<dbReference type="GeneID" id="839550"/>
<dbReference type="Gramene" id="AT1G01070.1">
    <molecule id="Q5XEZ0-1"/>
    <property type="protein sequence ID" value="AT1G01070.1"/>
    <property type="gene ID" value="AT1G01070"/>
</dbReference>
<dbReference type="Gramene" id="AT1G01070.2">
    <molecule id="Q5XEZ0-2"/>
    <property type="protein sequence ID" value="AT1G01070.2"/>
    <property type="gene ID" value="AT1G01070"/>
</dbReference>
<dbReference type="KEGG" id="ath:AT1G01070"/>
<dbReference type="Araport" id="AT1G01070"/>
<dbReference type="TAIR" id="AT1G01070">
    <property type="gene designation" value="UMAMIT28"/>
</dbReference>
<dbReference type="eggNOG" id="ENOG502QWIP">
    <property type="taxonomic scope" value="Eukaryota"/>
</dbReference>
<dbReference type="HOGENOM" id="CLU_025359_1_0_1"/>
<dbReference type="InParanoid" id="Q5XEZ0"/>
<dbReference type="OMA" id="PWLAHIF"/>
<dbReference type="PhylomeDB" id="Q5XEZ0"/>
<dbReference type="PRO" id="PR:Q5XEZ0"/>
<dbReference type="Proteomes" id="UP000006548">
    <property type="component" value="Chromosome 1"/>
</dbReference>
<dbReference type="ExpressionAtlas" id="Q5XEZ0">
    <property type="expression patterns" value="baseline and differential"/>
</dbReference>
<dbReference type="GO" id="GO:0005886">
    <property type="term" value="C:plasma membrane"/>
    <property type="evidence" value="ECO:0000314"/>
    <property type="project" value="TAIR"/>
</dbReference>
<dbReference type="GO" id="GO:0015186">
    <property type="term" value="F:L-glutamine transmembrane transporter activity"/>
    <property type="evidence" value="ECO:0000314"/>
    <property type="project" value="TAIR"/>
</dbReference>
<dbReference type="GO" id="GO:0048316">
    <property type="term" value="P:seed development"/>
    <property type="evidence" value="ECO:0000315"/>
    <property type="project" value="TAIR"/>
</dbReference>
<dbReference type="InterPro" id="IPR000620">
    <property type="entry name" value="EamA_dom"/>
</dbReference>
<dbReference type="InterPro" id="IPR030184">
    <property type="entry name" value="WAT1-related"/>
</dbReference>
<dbReference type="PANTHER" id="PTHR31218">
    <property type="entry name" value="WAT1-RELATED PROTEIN"/>
    <property type="match status" value="1"/>
</dbReference>
<dbReference type="Pfam" id="PF00892">
    <property type="entry name" value="EamA"/>
    <property type="match status" value="2"/>
</dbReference>
<dbReference type="SUPFAM" id="SSF103481">
    <property type="entry name" value="Multidrug resistance efflux transporter EmrE"/>
    <property type="match status" value="2"/>
</dbReference>
<comment type="subcellular location">
    <subcellularLocation>
        <location evidence="1">Membrane</location>
        <topology evidence="5">Multi-pass membrane protein</topology>
    </subcellularLocation>
</comment>
<comment type="alternative products">
    <event type="alternative splicing"/>
    <isoform>
        <id>Q5XEZ0-1</id>
        <name>1</name>
        <sequence type="displayed"/>
    </isoform>
    <isoform>
        <id>Q5XEZ0-2</id>
        <name>2</name>
        <sequence type="described" ref="VSP_045501"/>
    </isoform>
</comment>
<comment type="similarity">
    <text evidence="5">Belongs to the drug/metabolite transporter (DMT) superfamily. Plant drug/metabolite exporter (P-DME) (TC 2.A.7.4) family.</text>
</comment>
<comment type="sequence caution" evidence="5">
    <conflict type="erroneous gene model prediction">
        <sequence resource="EMBL-CDS" id="AAF26473"/>
    </conflict>
</comment>
<gene>
    <name type="ordered locus">At1g01070</name>
    <name type="ORF">T25K16.7</name>
</gene>
<feature type="chain" id="PRO_0000421309" description="WAT1-related protein At1g01070">
    <location>
        <begin position="1"/>
        <end position="365"/>
    </location>
</feature>
<feature type="transmembrane region" description="Helical" evidence="2">
    <location>
        <begin position="14"/>
        <end position="34"/>
    </location>
</feature>
<feature type="transmembrane region" description="Helical" evidence="2">
    <location>
        <begin position="46"/>
        <end position="66"/>
    </location>
</feature>
<feature type="transmembrane region" description="Helical" evidence="2">
    <location>
        <begin position="83"/>
        <end position="103"/>
    </location>
</feature>
<feature type="transmembrane region" description="Helical" evidence="2">
    <location>
        <begin position="107"/>
        <end position="127"/>
    </location>
</feature>
<feature type="transmembrane region" description="Helical" evidence="2">
    <location>
        <begin position="139"/>
        <end position="159"/>
    </location>
</feature>
<feature type="transmembrane region" description="Helical" evidence="2">
    <location>
        <begin position="189"/>
        <end position="209"/>
    </location>
</feature>
<feature type="transmembrane region" description="Helical" evidence="2">
    <location>
        <begin position="221"/>
        <end position="241"/>
    </location>
</feature>
<feature type="transmembrane region" description="Helical" evidence="2">
    <location>
        <begin position="255"/>
        <end position="275"/>
    </location>
</feature>
<feature type="transmembrane region" description="Helical" evidence="2">
    <location>
        <begin position="285"/>
        <end position="305"/>
    </location>
</feature>
<feature type="transmembrane region" description="Helical" evidence="2">
    <location>
        <begin position="310"/>
        <end position="330"/>
    </location>
</feature>
<feature type="domain" description="EamA 1">
    <location>
        <begin position="27"/>
        <end position="157"/>
    </location>
</feature>
<feature type="domain" description="EamA 2">
    <location>
        <begin position="223"/>
        <end position="329"/>
    </location>
</feature>
<feature type="region of interest" description="Disordered" evidence="3">
    <location>
        <begin position="340"/>
        <end position="365"/>
    </location>
</feature>
<feature type="compositionally biased region" description="Polar residues" evidence="3">
    <location>
        <begin position="340"/>
        <end position="356"/>
    </location>
</feature>
<feature type="splice variant" id="VSP_045501" description="In isoform 2." evidence="4">
    <original>MAGDMQGVRVVEKYSPVIVMVMSNVAMGSVNALVKKALDVGVNHMVIGAYRMAISALILVPFAYVLE</original>
    <variation>MLIYMYNFNEFSKEFLLLLN</variation>
    <location>
        <begin position="1"/>
        <end position="67"/>
    </location>
</feature>
<feature type="sequence conflict" description="In Ref. 3; BX816126." evidence="5" ref="3">
    <original>N</original>
    <variation>H</variation>
    <location>
        <position position="187"/>
    </location>
</feature>
<feature type="sequence conflict" description="In Ref. 3; BX816126." evidence="5" ref="3">
    <original>S</original>
    <variation>F</variation>
    <location>
        <position position="361"/>
    </location>
</feature>
<organism>
    <name type="scientific">Arabidopsis thaliana</name>
    <name type="common">Mouse-ear cress</name>
    <dbReference type="NCBI Taxonomy" id="3702"/>
    <lineage>
        <taxon>Eukaryota</taxon>
        <taxon>Viridiplantae</taxon>
        <taxon>Streptophyta</taxon>
        <taxon>Embryophyta</taxon>
        <taxon>Tracheophyta</taxon>
        <taxon>Spermatophyta</taxon>
        <taxon>Magnoliopsida</taxon>
        <taxon>eudicotyledons</taxon>
        <taxon>Gunneridae</taxon>
        <taxon>Pentapetalae</taxon>
        <taxon>rosids</taxon>
        <taxon>malvids</taxon>
        <taxon>Brassicales</taxon>
        <taxon>Brassicaceae</taxon>
        <taxon>Camelineae</taxon>
        <taxon>Arabidopsis</taxon>
    </lineage>
</organism>
<sequence length="365" mass="39810">MAGDMQGVRVVEKYSPVIVMVMSNVAMGSVNALVKKALDVGVNHMVIGAYRMAISALILVPFAYVLERKTRPQITFRLMVDHFVSGLLGASLMQFFFLLGLSYTSATVSCALVSMLPAITFALALIFRTENVKILKTKAGMLKVIGTLICISGALFLTFYKGPQISNSHSHSHGGASHNNNDQDKANNWLLGCLYLTIGTVLLSLWMLFQGTLSIKYPCKYSSTCLMSIFAAFQCALLSLYKSRDVNDWIIDDRFVITVIIYAGVVGQAMTTVATTWGIKKLGAVFASAFFPLTLISATLFDFLILHTPLYLGSVIGSLVTITGLYMFLWGKNKETESSTALSSGMDNEAQYTTPNKDNDSKSPV</sequence>
<evidence type="ECO:0000250" key="1"/>
<evidence type="ECO:0000255" key="2"/>
<evidence type="ECO:0000256" key="3">
    <source>
        <dbReference type="SAM" id="MobiDB-lite"/>
    </source>
</evidence>
<evidence type="ECO:0000303" key="4">
    <source>
    </source>
</evidence>
<evidence type="ECO:0000305" key="5"/>
<name>WTR1_ARATH</name>
<proteinExistence type="evidence at transcript level"/>
<reference key="1">
    <citation type="journal article" date="2000" name="Nature">
        <title>Sequence and analysis of chromosome 1 of the plant Arabidopsis thaliana.</title>
        <authorList>
            <person name="Theologis A."/>
            <person name="Ecker J.R."/>
            <person name="Palm C.J."/>
            <person name="Federspiel N.A."/>
            <person name="Kaul S."/>
            <person name="White O."/>
            <person name="Alonso J."/>
            <person name="Altafi H."/>
            <person name="Araujo R."/>
            <person name="Bowman C.L."/>
            <person name="Brooks S.Y."/>
            <person name="Buehler E."/>
            <person name="Chan A."/>
            <person name="Chao Q."/>
            <person name="Chen H."/>
            <person name="Cheuk R.F."/>
            <person name="Chin C.W."/>
            <person name="Chung M.K."/>
            <person name="Conn L."/>
            <person name="Conway A.B."/>
            <person name="Conway A.R."/>
            <person name="Creasy T.H."/>
            <person name="Dewar K."/>
            <person name="Dunn P."/>
            <person name="Etgu P."/>
            <person name="Feldblyum T.V."/>
            <person name="Feng J.-D."/>
            <person name="Fong B."/>
            <person name="Fujii C.Y."/>
            <person name="Gill J.E."/>
            <person name="Goldsmith A.D."/>
            <person name="Haas B."/>
            <person name="Hansen N.F."/>
            <person name="Hughes B."/>
            <person name="Huizar L."/>
            <person name="Hunter J.L."/>
            <person name="Jenkins J."/>
            <person name="Johnson-Hopson C."/>
            <person name="Khan S."/>
            <person name="Khaykin E."/>
            <person name="Kim C.J."/>
            <person name="Koo H.L."/>
            <person name="Kremenetskaia I."/>
            <person name="Kurtz D.B."/>
            <person name="Kwan A."/>
            <person name="Lam B."/>
            <person name="Langin-Hooper S."/>
            <person name="Lee A."/>
            <person name="Lee J.M."/>
            <person name="Lenz C.A."/>
            <person name="Li J.H."/>
            <person name="Li Y.-P."/>
            <person name="Lin X."/>
            <person name="Liu S.X."/>
            <person name="Liu Z.A."/>
            <person name="Luros J.S."/>
            <person name="Maiti R."/>
            <person name="Marziali A."/>
            <person name="Militscher J."/>
            <person name="Miranda M."/>
            <person name="Nguyen M."/>
            <person name="Nierman W.C."/>
            <person name="Osborne B.I."/>
            <person name="Pai G."/>
            <person name="Peterson J."/>
            <person name="Pham P.K."/>
            <person name="Rizzo M."/>
            <person name="Rooney T."/>
            <person name="Rowley D."/>
            <person name="Sakano H."/>
            <person name="Salzberg S.L."/>
            <person name="Schwartz J.R."/>
            <person name="Shinn P."/>
            <person name="Southwick A.M."/>
            <person name="Sun H."/>
            <person name="Tallon L.J."/>
            <person name="Tambunga G."/>
            <person name="Toriumi M.J."/>
            <person name="Town C.D."/>
            <person name="Utterback T."/>
            <person name="Van Aken S."/>
            <person name="Vaysberg M."/>
            <person name="Vysotskaia V.S."/>
            <person name="Walker M."/>
            <person name="Wu D."/>
            <person name="Yu G."/>
            <person name="Fraser C.M."/>
            <person name="Venter J.C."/>
            <person name="Davis R.W."/>
        </authorList>
    </citation>
    <scope>NUCLEOTIDE SEQUENCE [LARGE SCALE GENOMIC DNA]</scope>
    <source>
        <strain>cv. Columbia</strain>
    </source>
</reference>
<reference key="2">
    <citation type="journal article" date="2017" name="Plant J.">
        <title>Araport11: a complete reannotation of the Arabidopsis thaliana reference genome.</title>
        <authorList>
            <person name="Cheng C.Y."/>
            <person name="Krishnakumar V."/>
            <person name="Chan A.P."/>
            <person name="Thibaud-Nissen F."/>
            <person name="Schobel S."/>
            <person name="Town C.D."/>
        </authorList>
    </citation>
    <scope>GENOME REANNOTATION</scope>
    <source>
        <strain>cv. Columbia</strain>
    </source>
</reference>
<reference key="3">
    <citation type="journal article" date="2004" name="Genome Res.">
        <title>Whole genome sequence comparisons and 'full-length' cDNA sequences: a combined approach to evaluate and improve Arabidopsis genome annotation.</title>
        <authorList>
            <person name="Castelli V."/>
            <person name="Aury J.-M."/>
            <person name="Jaillon O."/>
            <person name="Wincker P."/>
            <person name="Clepet C."/>
            <person name="Menard M."/>
            <person name="Cruaud C."/>
            <person name="Quetier F."/>
            <person name="Scarpelli C."/>
            <person name="Schaechter V."/>
            <person name="Temple G."/>
            <person name="Caboche M."/>
            <person name="Weissenbach J."/>
            <person name="Salanoubat M."/>
        </authorList>
    </citation>
    <scope>NUCLEOTIDE SEQUENCE [LARGE SCALE MRNA] (ISOFORM 2)</scope>
    <source>
        <strain>cv. Columbia</strain>
    </source>
</reference>
<reference key="4">
    <citation type="submission" date="2004-10" db="EMBL/GenBank/DDBJ databases">
        <title>Arabidopsis ORF clones.</title>
        <authorList>
            <person name="Kim C.J."/>
            <person name="Chen H."/>
            <person name="Cheuk R.F."/>
            <person name="Shinn P."/>
            <person name="Ecker J.R."/>
        </authorList>
    </citation>
    <scope>NUCLEOTIDE SEQUENCE [LARGE SCALE MRNA] (ISOFORM 1)</scope>
    <source>
        <strain>cv. Columbia</strain>
    </source>
</reference>
<keyword id="KW-0025">Alternative splicing</keyword>
<keyword id="KW-0472">Membrane</keyword>
<keyword id="KW-1185">Reference proteome</keyword>
<keyword id="KW-0677">Repeat</keyword>
<keyword id="KW-0812">Transmembrane</keyword>
<keyword id="KW-1133">Transmembrane helix</keyword>
<protein>
    <recommendedName>
        <fullName>WAT1-related protein At1g01070</fullName>
    </recommendedName>
</protein>
<accession>Q5XEZ0</accession>
<accession>F4HQH5</accession>
<accession>Q9MAM7</accession>